<feature type="chain" id="PRO_1000116734" description="Elongation factor Ts">
    <location>
        <begin position="1"/>
        <end position="283"/>
    </location>
</feature>
<feature type="region of interest" description="Involved in Mg(2+) ion dislocation from EF-Tu" evidence="1">
    <location>
        <begin position="80"/>
        <end position="83"/>
    </location>
</feature>
<comment type="function">
    <text evidence="1">Associates with the EF-Tu.GDP complex and induces the exchange of GDP to GTP. It remains bound to the aminoacyl-tRNA.EF-Tu.GTP complex up to the GTP hydrolysis stage on the ribosome.</text>
</comment>
<comment type="subcellular location">
    <subcellularLocation>
        <location evidence="1">Cytoplasm</location>
    </subcellularLocation>
</comment>
<comment type="similarity">
    <text evidence="1">Belongs to the EF-Ts family.</text>
</comment>
<dbReference type="EMBL" id="AP009240">
    <property type="protein sequence ID" value="BAG75693.1"/>
    <property type="molecule type" value="Genomic_DNA"/>
</dbReference>
<dbReference type="RefSeq" id="WP_000818114.1">
    <property type="nucleotide sequence ID" value="NC_011415.1"/>
</dbReference>
<dbReference type="SMR" id="B6HZE4"/>
<dbReference type="GeneID" id="93777255"/>
<dbReference type="KEGG" id="ecy:ECSE_0169"/>
<dbReference type="HOGENOM" id="CLU_047155_0_2_6"/>
<dbReference type="Proteomes" id="UP000008199">
    <property type="component" value="Chromosome"/>
</dbReference>
<dbReference type="GO" id="GO:0005737">
    <property type="term" value="C:cytoplasm"/>
    <property type="evidence" value="ECO:0007669"/>
    <property type="project" value="UniProtKB-SubCell"/>
</dbReference>
<dbReference type="GO" id="GO:0003746">
    <property type="term" value="F:translation elongation factor activity"/>
    <property type="evidence" value="ECO:0007669"/>
    <property type="project" value="UniProtKB-UniRule"/>
</dbReference>
<dbReference type="CDD" id="cd14275">
    <property type="entry name" value="UBA_EF-Ts"/>
    <property type="match status" value="1"/>
</dbReference>
<dbReference type="FunFam" id="1.10.286.20:FF:000001">
    <property type="entry name" value="Elongation factor Ts"/>
    <property type="match status" value="1"/>
</dbReference>
<dbReference type="FunFam" id="1.10.8.10:FF:000001">
    <property type="entry name" value="Elongation factor Ts"/>
    <property type="match status" value="1"/>
</dbReference>
<dbReference type="FunFam" id="3.30.479.20:FF:000001">
    <property type="entry name" value="Elongation factor Ts"/>
    <property type="match status" value="1"/>
</dbReference>
<dbReference type="Gene3D" id="1.10.286.20">
    <property type="match status" value="1"/>
</dbReference>
<dbReference type="Gene3D" id="1.10.8.10">
    <property type="entry name" value="DNA helicase RuvA subunit, C-terminal domain"/>
    <property type="match status" value="1"/>
</dbReference>
<dbReference type="Gene3D" id="3.30.479.20">
    <property type="entry name" value="Elongation factor Ts, dimerisation domain"/>
    <property type="match status" value="2"/>
</dbReference>
<dbReference type="HAMAP" id="MF_00050">
    <property type="entry name" value="EF_Ts"/>
    <property type="match status" value="1"/>
</dbReference>
<dbReference type="InterPro" id="IPR036402">
    <property type="entry name" value="EF-Ts_dimer_sf"/>
</dbReference>
<dbReference type="InterPro" id="IPR001816">
    <property type="entry name" value="Transl_elong_EFTs/EF1B"/>
</dbReference>
<dbReference type="InterPro" id="IPR014039">
    <property type="entry name" value="Transl_elong_EFTs/EF1B_dimer"/>
</dbReference>
<dbReference type="InterPro" id="IPR018101">
    <property type="entry name" value="Transl_elong_Ts_CS"/>
</dbReference>
<dbReference type="InterPro" id="IPR009060">
    <property type="entry name" value="UBA-like_sf"/>
</dbReference>
<dbReference type="NCBIfam" id="TIGR00116">
    <property type="entry name" value="tsf"/>
    <property type="match status" value="1"/>
</dbReference>
<dbReference type="PANTHER" id="PTHR11741">
    <property type="entry name" value="ELONGATION FACTOR TS"/>
    <property type="match status" value="1"/>
</dbReference>
<dbReference type="PANTHER" id="PTHR11741:SF0">
    <property type="entry name" value="ELONGATION FACTOR TS, MITOCHONDRIAL"/>
    <property type="match status" value="1"/>
</dbReference>
<dbReference type="Pfam" id="PF00889">
    <property type="entry name" value="EF_TS"/>
    <property type="match status" value="1"/>
</dbReference>
<dbReference type="SUPFAM" id="SSF54713">
    <property type="entry name" value="Elongation factor Ts (EF-Ts), dimerisation domain"/>
    <property type="match status" value="2"/>
</dbReference>
<dbReference type="SUPFAM" id="SSF46934">
    <property type="entry name" value="UBA-like"/>
    <property type="match status" value="1"/>
</dbReference>
<dbReference type="PROSITE" id="PS01126">
    <property type="entry name" value="EF_TS_1"/>
    <property type="match status" value="1"/>
</dbReference>
<dbReference type="PROSITE" id="PS01127">
    <property type="entry name" value="EF_TS_2"/>
    <property type="match status" value="1"/>
</dbReference>
<reference key="1">
    <citation type="journal article" date="2008" name="DNA Res.">
        <title>Complete genome sequence and comparative analysis of the wild-type commensal Escherichia coli strain SE11 isolated from a healthy adult.</title>
        <authorList>
            <person name="Oshima K."/>
            <person name="Toh H."/>
            <person name="Ogura Y."/>
            <person name="Sasamoto H."/>
            <person name="Morita H."/>
            <person name="Park S.-H."/>
            <person name="Ooka T."/>
            <person name="Iyoda S."/>
            <person name="Taylor T.D."/>
            <person name="Hayashi T."/>
            <person name="Itoh K."/>
            <person name="Hattori M."/>
        </authorList>
    </citation>
    <scope>NUCLEOTIDE SEQUENCE [LARGE SCALE GENOMIC DNA]</scope>
    <source>
        <strain>SE11</strain>
    </source>
</reference>
<organism>
    <name type="scientific">Escherichia coli (strain SE11)</name>
    <dbReference type="NCBI Taxonomy" id="409438"/>
    <lineage>
        <taxon>Bacteria</taxon>
        <taxon>Pseudomonadati</taxon>
        <taxon>Pseudomonadota</taxon>
        <taxon>Gammaproteobacteria</taxon>
        <taxon>Enterobacterales</taxon>
        <taxon>Enterobacteriaceae</taxon>
        <taxon>Escherichia</taxon>
    </lineage>
</organism>
<name>EFTS_ECOSE</name>
<keyword id="KW-0963">Cytoplasm</keyword>
<keyword id="KW-0251">Elongation factor</keyword>
<keyword id="KW-0648">Protein biosynthesis</keyword>
<gene>
    <name evidence="1" type="primary">tsf</name>
    <name type="ordered locus">ECSE_0169</name>
</gene>
<accession>B6HZE4</accession>
<sequence length="283" mass="30423">MAEITASLVKELRERTGAGMMDCKKALTEANGDIELAIENMRKSGAIKAAKKAGNVAADGVIKTKIDGNYGIILEVNCQTDFVAKDAGFQAFADKVLDAAVAGKITDVEVLKAQFEEERVALVAKIGENINIRRVAALEGDVLGSYQHGARIGVLVAAKGADEELVKHIAMHVAASKPEFIKPEDVSAEVVEKEYQVQLDIAMQSGKPKEIAEKMVEGRMKKFTGEVSLTGQPFVMEPSKTVGQLLKEHNAEVTGFIRFEVGEGIEKVETDFAAEVAAMSKQS</sequence>
<evidence type="ECO:0000255" key="1">
    <source>
        <dbReference type="HAMAP-Rule" id="MF_00050"/>
    </source>
</evidence>
<protein>
    <recommendedName>
        <fullName evidence="1">Elongation factor Ts</fullName>
        <shortName evidence="1">EF-Ts</shortName>
    </recommendedName>
</protein>
<proteinExistence type="inferred from homology"/>